<keyword id="KW-0170">Cobalt</keyword>
<keyword id="KW-0963">Cytoplasm</keyword>
<keyword id="KW-0460">Magnesium</keyword>
<keyword id="KW-0479">Metal-binding</keyword>
<keyword id="KW-0520">NAD</keyword>
<keyword id="KW-0521">NADP</keyword>
<keyword id="KW-0560">Oxidoreductase</keyword>
<keyword id="KW-0664">Pyridoxine biosynthesis</keyword>
<keyword id="KW-0862">Zinc</keyword>
<accession>B6JP92</accession>
<feature type="chain" id="PRO_1000128251" description="4-hydroxythreonine-4-phosphate dehydrogenase">
    <location>
        <begin position="1"/>
        <end position="307"/>
    </location>
</feature>
<feature type="binding site" evidence="1">
    <location>
        <position position="126"/>
    </location>
    <ligand>
        <name>substrate</name>
    </ligand>
</feature>
<feature type="binding site" evidence="1">
    <location>
        <position position="127"/>
    </location>
    <ligand>
        <name>substrate</name>
    </ligand>
</feature>
<feature type="binding site" evidence="1">
    <location>
        <position position="156"/>
    </location>
    <ligand>
        <name>a divalent metal cation</name>
        <dbReference type="ChEBI" id="CHEBI:60240"/>
        <note>ligand shared between dimeric partners</note>
    </ligand>
</feature>
<feature type="binding site" evidence="1">
    <location>
        <position position="195"/>
    </location>
    <ligand>
        <name>a divalent metal cation</name>
        <dbReference type="ChEBI" id="CHEBI:60240"/>
        <note>ligand shared between dimeric partners</note>
    </ligand>
</feature>
<feature type="binding site" evidence="1">
    <location>
        <position position="251"/>
    </location>
    <ligand>
        <name>a divalent metal cation</name>
        <dbReference type="ChEBI" id="CHEBI:60240"/>
        <note>ligand shared between dimeric partners</note>
    </ligand>
</feature>
<feature type="binding site" evidence="1">
    <location>
        <position position="259"/>
    </location>
    <ligand>
        <name>substrate</name>
    </ligand>
</feature>
<feature type="binding site" evidence="1">
    <location>
        <position position="268"/>
    </location>
    <ligand>
        <name>substrate</name>
    </ligand>
</feature>
<feature type="binding site" evidence="1">
    <location>
        <position position="277"/>
    </location>
    <ligand>
        <name>substrate</name>
    </ligand>
</feature>
<gene>
    <name evidence="1" type="primary">pdxA</name>
    <name type="ordered locus">HPP12_1574</name>
</gene>
<proteinExistence type="inferred from homology"/>
<sequence>MAKKKIAISCGDIQGVGLELILKSHKEVNAFCEPLYLIDGELLERANQLLHNAYETKTLNALAIHSPLPLLNSSTIGKISAQSGAYSFESFKKACELADSEEVDGICTLPINKLAWQQAQIPFVGHTDFLKQRYKEHQIIMMLGCSKLFVGLFSDHVPLSAVSQLIQVEALVKFLLAFQKSTQAKIVQVCGFNPHAGEEGLFGKEDEKILKAIQKSNQTLGFECFLGPLPADSAFAPNKRKITPFYVSMSHDVGLAPLKALYFDESINVSLNAPILRVSTDHGTAFDIAYQNKANNKSYLNAIKYLA</sequence>
<evidence type="ECO:0000255" key="1">
    <source>
        <dbReference type="HAMAP-Rule" id="MF_02086"/>
    </source>
</evidence>
<dbReference type="EC" id="1.1.1.262" evidence="1"/>
<dbReference type="EMBL" id="CP001217">
    <property type="protein sequence ID" value="ACJ08720.1"/>
    <property type="molecule type" value="Genomic_DNA"/>
</dbReference>
<dbReference type="SMR" id="B6JP92"/>
<dbReference type="KEGG" id="hpp:HPP12_1574"/>
<dbReference type="HOGENOM" id="CLU_040168_0_0_7"/>
<dbReference type="UniPathway" id="UPA00244">
    <property type="reaction ID" value="UER00312"/>
</dbReference>
<dbReference type="Proteomes" id="UP000008198">
    <property type="component" value="Chromosome"/>
</dbReference>
<dbReference type="GO" id="GO:0005737">
    <property type="term" value="C:cytoplasm"/>
    <property type="evidence" value="ECO:0007669"/>
    <property type="project" value="UniProtKB-SubCell"/>
</dbReference>
<dbReference type="GO" id="GO:0050570">
    <property type="term" value="F:4-hydroxythreonine-4-phosphate dehydrogenase activity"/>
    <property type="evidence" value="ECO:0007669"/>
    <property type="project" value="UniProtKB-UniRule"/>
</dbReference>
<dbReference type="GO" id="GO:0050897">
    <property type="term" value="F:cobalt ion binding"/>
    <property type="evidence" value="ECO:0007669"/>
    <property type="project" value="UniProtKB-UniRule"/>
</dbReference>
<dbReference type="GO" id="GO:0000287">
    <property type="term" value="F:magnesium ion binding"/>
    <property type="evidence" value="ECO:0007669"/>
    <property type="project" value="UniProtKB-UniRule"/>
</dbReference>
<dbReference type="GO" id="GO:0051287">
    <property type="term" value="F:NAD binding"/>
    <property type="evidence" value="ECO:0007669"/>
    <property type="project" value="InterPro"/>
</dbReference>
<dbReference type="GO" id="GO:0008270">
    <property type="term" value="F:zinc ion binding"/>
    <property type="evidence" value="ECO:0007669"/>
    <property type="project" value="UniProtKB-UniRule"/>
</dbReference>
<dbReference type="GO" id="GO:0042823">
    <property type="term" value="P:pyridoxal phosphate biosynthetic process"/>
    <property type="evidence" value="ECO:0007669"/>
    <property type="project" value="UniProtKB-UniRule"/>
</dbReference>
<dbReference type="GO" id="GO:0008615">
    <property type="term" value="P:pyridoxine biosynthetic process"/>
    <property type="evidence" value="ECO:0007669"/>
    <property type="project" value="UniProtKB-UniRule"/>
</dbReference>
<dbReference type="Gene3D" id="3.40.718.10">
    <property type="entry name" value="Isopropylmalate Dehydrogenase"/>
    <property type="match status" value="1"/>
</dbReference>
<dbReference type="HAMAP" id="MF_02086">
    <property type="entry name" value="PdxA_Epsilonprot"/>
    <property type="match status" value="1"/>
</dbReference>
<dbReference type="InterPro" id="IPR037539">
    <property type="entry name" value="PdxA_epsilonprot"/>
</dbReference>
<dbReference type="InterPro" id="IPR005255">
    <property type="entry name" value="PdxA_fam"/>
</dbReference>
<dbReference type="NCBIfam" id="TIGR00557">
    <property type="entry name" value="pdxA"/>
    <property type="match status" value="1"/>
</dbReference>
<dbReference type="NCBIfam" id="NF003040">
    <property type="entry name" value="PRK03946.1"/>
    <property type="match status" value="1"/>
</dbReference>
<dbReference type="PANTHER" id="PTHR30004">
    <property type="entry name" value="4-HYDROXYTHREONINE-4-PHOSPHATE DEHYDROGENASE"/>
    <property type="match status" value="1"/>
</dbReference>
<dbReference type="PANTHER" id="PTHR30004:SF6">
    <property type="entry name" value="D-THREONATE 4-PHOSPHATE DEHYDROGENASE"/>
    <property type="match status" value="1"/>
</dbReference>
<dbReference type="Pfam" id="PF04166">
    <property type="entry name" value="PdxA"/>
    <property type="match status" value="1"/>
</dbReference>
<dbReference type="SUPFAM" id="SSF53659">
    <property type="entry name" value="Isocitrate/Isopropylmalate dehydrogenase-like"/>
    <property type="match status" value="1"/>
</dbReference>
<protein>
    <recommendedName>
        <fullName evidence="1">4-hydroxythreonine-4-phosphate dehydrogenase</fullName>
        <ecNumber evidence="1">1.1.1.262</ecNumber>
    </recommendedName>
    <alternativeName>
        <fullName evidence="1">4-(phosphohydroxy)-L-threonine dehydrogenase</fullName>
    </alternativeName>
</protein>
<reference key="1">
    <citation type="submission" date="2008-10" db="EMBL/GenBank/DDBJ databases">
        <title>The complete genome sequence of Helicobacter pylori strain P12.</title>
        <authorList>
            <person name="Fischer W."/>
            <person name="Windhager L."/>
            <person name="Karnholz A."/>
            <person name="Zeiller M."/>
            <person name="Zimmer R."/>
            <person name="Haas R."/>
        </authorList>
    </citation>
    <scope>NUCLEOTIDE SEQUENCE [LARGE SCALE GENOMIC DNA]</scope>
    <source>
        <strain>P12</strain>
    </source>
</reference>
<comment type="function">
    <text evidence="1">Catalyzes the NAD(P)-dependent oxidation of 4-(phosphooxy)-L-threonine (HTP) into 2-amino-3-oxo-4-(phosphooxy)butyric acid which spontaneously decarboxylates to form 3-amino-2-oxopropyl phosphate (AHAP).</text>
</comment>
<comment type="catalytic activity">
    <reaction evidence="1">
        <text>4-(phosphooxy)-L-threonine + NAD(+) = 3-amino-2-oxopropyl phosphate + CO2 + NADH</text>
        <dbReference type="Rhea" id="RHEA:32275"/>
        <dbReference type="ChEBI" id="CHEBI:16526"/>
        <dbReference type="ChEBI" id="CHEBI:57279"/>
        <dbReference type="ChEBI" id="CHEBI:57540"/>
        <dbReference type="ChEBI" id="CHEBI:57945"/>
        <dbReference type="ChEBI" id="CHEBI:58452"/>
        <dbReference type="EC" id="1.1.1.262"/>
    </reaction>
</comment>
<comment type="cofactor">
    <cofactor evidence="1">
        <name>Zn(2+)</name>
        <dbReference type="ChEBI" id="CHEBI:29105"/>
    </cofactor>
    <cofactor evidence="1">
        <name>Mg(2+)</name>
        <dbReference type="ChEBI" id="CHEBI:18420"/>
    </cofactor>
    <cofactor evidence="1">
        <name>Co(2+)</name>
        <dbReference type="ChEBI" id="CHEBI:48828"/>
    </cofactor>
</comment>
<comment type="pathway">
    <text evidence="1">Cofactor biosynthesis; pyridoxine 5'-phosphate biosynthesis; pyridoxine 5'-phosphate from D-erythrose 4-phosphate: step 4/5.</text>
</comment>
<comment type="subunit">
    <text evidence="1">Homodimer.</text>
</comment>
<comment type="subcellular location">
    <subcellularLocation>
        <location evidence="1">Cytoplasm</location>
    </subcellularLocation>
</comment>
<comment type="miscellaneous">
    <text evidence="1">The active site is located at the dimer interface.</text>
</comment>
<comment type="similarity">
    <text evidence="1">Belongs to the PdxA family.</text>
</comment>
<name>PDXA_HELP2</name>
<organism>
    <name type="scientific">Helicobacter pylori (strain P12)</name>
    <dbReference type="NCBI Taxonomy" id="570508"/>
    <lineage>
        <taxon>Bacteria</taxon>
        <taxon>Pseudomonadati</taxon>
        <taxon>Campylobacterota</taxon>
        <taxon>Epsilonproteobacteria</taxon>
        <taxon>Campylobacterales</taxon>
        <taxon>Helicobacteraceae</taxon>
        <taxon>Helicobacter</taxon>
    </lineage>
</organism>